<name>EGL1_CAEEL</name>
<feature type="chain" id="PRO_0000086944" description="Programmed cell death activator egl-1">
    <location>
        <begin position="1"/>
        <end position="106"/>
    </location>
</feature>
<feature type="region of interest" description="BH3-like" evidence="10">
    <location>
        <begin position="73"/>
        <end position="81"/>
    </location>
</feature>
<feature type="mutagenesis site" description="Reduced ability to bind ced-9 in vitro." evidence="9">
    <location>
        <begin position="73"/>
        <end position="81"/>
    </location>
</feature>
<feature type="helix" evidence="15">
    <location>
        <begin position="65"/>
        <end position="84"/>
    </location>
</feature>
<feature type="helix" evidence="15">
    <location>
        <begin position="85"/>
        <end position="87"/>
    </location>
</feature>
<keyword id="KW-0002">3D-structure</keyword>
<keyword id="KW-0053">Apoptosis</keyword>
<keyword id="KW-1185">Reference proteome</keyword>
<keyword id="KW-0770">Synapse</keyword>
<sequence>MLMLTFASTSSDLLPMSNVFDVQSSVFYNEKNMFYSSSQDFSSCEDSSQFADDSGFFDDSEISSIGYEIGSKLAAMCDDFDAQMMSYSAHASDRSLFHRLLDFFAF</sequence>
<reference evidence="11 12" key="1">
    <citation type="journal article" date="1998" name="Cell">
        <title>The C. elegans protein EGL-1 is required for programmed cell death and interacts with the Bcl-2-like protein CED-9.</title>
        <authorList>
            <person name="Conradt B."/>
            <person name="Horvitz H.R."/>
        </authorList>
    </citation>
    <scope>NUCLEOTIDE SEQUENCE [MRNA]</scope>
    <scope>FUNCTION</scope>
    <scope>INTERACTION WITH CED-9</scope>
    <scope>DISRUPTION PHENOTYPE</scope>
    <scope>MUTAGENESIS OF 73-LEU--ASP-81</scope>
    <source>
        <strain evidence="12">Bristol N2</strain>
    </source>
</reference>
<reference evidence="11 13" key="2">
    <citation type="journal article" date="1998" name="Science">
        <title>Genome sequence of the nematode C. elegans: a platform for investigating biology.</title>
        <authorList>
            <consortium name="The C. elegans sequencing consortium"/>
        </authorList>
    </citation>
    <scope>NUCLEOTIDE SEQUENCE [LARGE SCALE GENOMIC DNA]</scope>
    <source>
        <strain evidence="13">Bristol N2</strain>
    </source>
</reference>
<reference evidence="11" key="3">
    <citation type="journal article" date="2000" name="Science">
        <title>Translocation of C. elegans CED-4 to nuclear membranes during programmed cell death.</title>
        <authorList>
            <person name="Chen F."/>
            <person name="Hersh B.M."/>
            <person name="Conradt B."/>
            <person name="Zhou Z."/>
            <person name="Riemer D."/>
            <person name="Gruenbaum Y."/>
            <person name="Horvitz H.R."/>
        </authorList>
    </citation>
    <scope>FUNCTION</scope>
</reference>
<reference key="4">
    <citation type="journal article" date="2003" name="Development">
        <title>The Snail-like CES-1 protein of C. elegans can block the expression of the BH3-only cell-death activator gene egl-1 by antagonizing the function of bHLH proteins.</title>
        <authorList>
            <person name="Thellmann M."/>
            <person name="Hatzold J."/>
            <person name="Conradt B."/>
        </authorList>
    </citation>
    <scope>FUNCTION</scope>
</reference>
<reference key="5">
    <citation type="journal article" date="2005" name="Nature">
        <title>DRP-1-mediated mitochondrial fragmentation during EGL-1-induced cell death in C. elegans.</title>
        <authorList>
            <person name="Jagasia R."/>
            <person name="Grote P."/>
            <person name="Westermann B."/>
            <person name="Conradt B."/>
        </authorList>
    </citation>
    <scope>FUNCTION</scope>
</reference>
<reference key="6">
    <citation type="journal article" date="2009" name="Curr. Biol.">
        <title>Bcl-2 proteins EGL-1 and CED-9 do not regulate mitochondrial fission or fusion in Caenorhabditis elegans.</title>
        <authorList>
            <person name="Breckenridge D.G."/>
            <person name="Kang B.H."/>
            <person name="Xue D."/>
        </authorList>
    </citation>
    <scope>FUNCTION</scope>
</reference>
<reference key="7">
    <citation type="journal article" date="2011" name="Proc. Natl. Acad. Sci. U.S.A.">
        <title>A molecular switch that governs mitochondrial fusion and fission mediated by the BCL2-like protein CED-9 of Caenorhabditis elegans.</title>
        <authorList>
            <person name="Lu Y."/>
            <person name="Rolland S.G."/>
            <person name="Conradt B."/>
        </authorList>
    </citation>
    <scope>FUNCTION</scope>
    <scope>INTERACTION WITH CED-9</scope>
</reference>
<reference key="8">
    <citation type="journal article" date="2014" name="Elife">
        <title>CED-3 caspase acts with miRNAs to regulate non-apoptotic gene expression dynamics for robust development in C. elegans.</title>
        <authorList>
            <person name="Weaver B.P."/>
            <person name="Zabinsky R."/>
            <person name="Weaver Y.M."/>
            <person name="Lee E.S."/>
            <person name="Xue D."/>
            <person name="Han M."/>
        </authorList>
    </citation>
    <scope>FUNCTION</scope>
    <scope>DISRUPTION PHENOTYPE</scope>
</reference>
<reference key="9">
    <citation type="journal article" date="2015" name="Cell Rep.">
        <title>The cell death pathway regulates synapse elimination through cleavage of gelsolin in Caenorhabditis elegans neurons.</title>
        <authorList>
            <person name="Meng L."/>
            <person name="Mulcahy B."/>
            <person name="Cook S.J."/>
            <person name="Neubauer M."/>
            <person name="Wan A."/>
            <person name="Jin Y."/>
            <person name="Yan D."/>
        </authorList>
    </citation>
    <scope>FUNCTION</scope>
    <scope>SUBCELLULAR LOCATION</scope>
</reference>
<reference key="10">
    <citation type="journal article" date="2010" name="Proc. Natl. Acad. Sci. U.S.A.">
        <title>Six and Eya promote apoptosis through direct transcriptional activation of the proapoptotic BH3-only gene egl-1 in Caenorhabditis elegans.</title>
        <authorList>
            <person name="Hirose T."/>
            <person name="Galvin B.D."/>
            <person name="Horvitz H.R."/>
        </authorList>
    </citation>
    <scope>FUNCTION</scope>
</reference>
<reference key="11">
    <citation type="journal article" date="2004" name="Mol. Cell">
        <title>Structural, biochemical, and functional analyses of CED-9 recognition by the proapoptotic proteins EGL-1 and CED-4.</title>
        <authorList>
            <person name="Yan N."/>
            <person name="Gu L."/>
            <person name="Kokel D."/>
            <person name="Chai J."/>
            <person name="Li W."/>
            <person name="Han A."/>
            <person name="Chen L."/>
            <person name="Xue D."/>
            <person name="Shi Y."/>
        </authorList>
    </citation>
    <scope>X-RAY CRYSTALLOGRAPHY (2.2 ANGSTROMS) OF 46-102 IN COMPLEX WITH CED-9</scope>
    <scope>FUNCTION</scope>
</reference>
<protein>
    <recommendedName>
        <fullName>Programmed cell death activator egl-1</fullName>
    </recommendedName>
    <alternativeName>
        <fullName>Egg-laying defective protein 1</fullName>
    </alternativeName>
</protein>
<proteinExistence type="evidence at protein level"/>
<dbReference type="EMBL" id="AF057309">
    <property type="protein sequence ID" value="AAC39023.1"/>
    <property type="status" value="ALT_INIT"/>
    <property type="molecule type" value="mRNA"/>
</dbReference>
<dbReference type="EMBL" id="BX284605">
    <property type="protein sequence ID" value="CAB82213.2"/>
    <property type="molecule type" value="Genomic_DNA"/>
</dbReference>
<dbReference type="PIR" id="T43032">
    <property type="entry name" value="T43032"/>
</dbReference>
<dbReference type="RefSeq" id="NP_506575.2">
    <property type="nucleotide sequence ID" value="NM_074174.3"/>
</dbReference>
<dbReference type="PDB" id="1TY4">
    <property type="method" value="X-ray"/>
    <property type="resolution" value="2.20 A"/>
    <property type="chains" value="C/D=46-102"/>
</dbReference>
<dbReference type="PDBsum" id="1TY4"/>
<dbReference type="SMR" id="O61667"/>
<dbReference type="BioGRID" id="44947">
    <property type="interactions" value="1"/>
</dbReference>
<dbReference type="ComplexPortal" id="CPX-398">
    <property type="entry name" value="ced-9-egl-1 complex"/>
</dbReference>
<dbReference type="ELM" id="O61667"/>
<dbReference type="FunCoup" id="O61667">
    <property type="interactions" value="1356"/>
</dbReference>
<dbReference type="IntAct" id="O61667">
    <property type="interactions" value="2"/>
</dbReference>
<dbReference type="STRING" id="6239.F23B12.9.1"/>
<dbReference type="PaxDb" id="6239-F23B12.9"/>
<dbReference type="EnsemblMetazoa" id="F23B12.9.1">
    <property type="protein sequence ID" value="F23B12.9.1"/>
    <property type="gene ID" value="WBGene00001170"/>
</dbReference>
<dbReference type="GeneID" id="179943"/>
<dbReference type="KEGG" id="cel:CELE_F23B12.9"/>
<dbReference type="UCSC" id="F23B12.9">
    <property type="organism name" value="c. elegans"/>
</dbReference>
<dbReference type="AGR" id="WB:WBGene00001170"/>
<dbReference type="CTD" id="179943"/>
<dbReference type="WormBase" id="F23B12.9">
    <property type="protein sequence ID" value="CE35714"/>
    <property type="gene ID" value="WBGene00001170"/>
    <property type="gene designation" value="egl-1"/>
</dbReference>
<dbReference type="eggNOG" id="ENOG502TIVM">
    <property type="taxonomic scope" value="Eukaryota"/>
</dbReference>
<dbReference type="HOGENOM" id="CLU_2123374_0_0_1"/>
<dbReference type="InParanoid" id="O61667"/>
<dbReference type="OMA" id="DAEMMSY"/>
<dbReference type="OrthoDB" id="5874506at2759"/>
<dbReference type="EvolutionaryTrace" id="O61667"/>
<dbReference type="PRO" id="PR:O61667"/>
<dbReference type="Proteomes" id="UP000001940">
    <property type="component" value="Chromosome V"/>
</dbReference>
<dbReference type="Bgee" id="WBGene00001170">
    <property type="expression patterns" value="Expressed in pharyngeal muscle cell (C elegans) and 12 other cell types or tissues"/>
</dbReference>
<dbReference type="GO" id="GO:0005829">
    <property type="term" value="C:cytosol"/>
    <property type="evidence" value="ECO:0000314"/>
    <property type="project" value="WormBase"/>
</dbReference>
<dbReference type="GO" id="GO:0043231">
    <property type="term" value="C:intracellular membrane-bounded organelle"/>
    <property type="evidence" value="ECO:0000314"/>
    <property type="project" value="WormBase"/>
</dbReference>
<dbReference type="GO" id="GO:0005739">
    <property type="term" value="C:mitochondrion"/>
    <property type="evidence" value="ECO:0000314"/>
    <property type="project" value="WormBase"/>
</dbReference>
<dbReference type="GO" id="GO:0098793">
    <property type="term" value="C:presynapse"/>
    <property type="evidence" value="ECO:0000314"/>
    <property type="project" value="UniProtKB"/>
</dbReference>
<dbReference type="GO" id="GO:0030042">
    <property type="term" value="P:actin filament depolymerization"/>
    <property type="evidence" value="ECO:0000315"/>
    <property type="project" value="UniProtKB"/>
</dbReference>
<dbReference type="GO" id="GO:0008637">
    <property type="term" value="P:apoptotic mitochondrial changes"/>
    <property type="evidence" value="ECO:0000314"/>
    <property type="project" value="WormBase"/>
</dbReference>
<dbReference type="GO" id="GO:0006915">
    <property type="term" value="P:apoptotic process"/>
    <property type="evidence" value="ECO:0000315"/>
    <property type="project" value="UniProtKB"/>
</dbReference>
<dbReference type="GO" id="GO:1902742">
    <property type="term" value="P:apoptotic process involved in development"/>
    <property type="evidence" value="ECO:0000315"/>
    <property type="project" value="UniProtKB"/>
</dbReference>
<dbReference type="GO" id="GO:0050829">
    <property type="term" value="P:defense response to Gram-negative bacterium"/>
    <property type="evidence" value="ECO:0000315"/>
    <property type="project" value="UniProtKB"/>
</dbReference>
<dbReference type="GO" id="GO:0043065">
    <property type="term" value="P:positive regulation of apoptotic process"/>
    <property type="evidence" value="ECO:0000316"/>
    <property type="project" value="WormBase"/>
</dbReference>
<dbReference type="GO" id="GO:1904747">
    <property type="term" value="P:positive regulation of apoptotic process involved in development"/>
    <property type="evidence" value="ECO:0000316"/>
    <property type="project" value="UniProtKB"/>
</dbReference>
<dbReference type="GO" id="GO:0043068">
    <property type="term" value="P:positive regulation of programmed cell death"/>
    <property type="evidence" value="ECO:0000315"/>
    <property type="project" value="WormBase"/>
</dbReference>
<dbReference type="GO" id="GO:0031334">
    <property type="term" value="P:positive regulation of protein-containing complex assembly"/>
    <property type="evidence" value="ECO:0000314"/>
    <property type="project" value="UniProtKB"/>
</dbReference>
<dbReference type="GO" id="GO:1905808">
    <property type="term" value="P:positive regulation of synapse pruning"/>
    <property type="evidence" value="ECO:0000315"/>
    <property type="project" value="UniProtKB"/>
</dbReference>
<dbReference type="GO" id="GO:0040034">
    <property type="term" value="P:regulation of development, heterochronic"/>
    <property type="evidence" value="ECO:0000316"/>
    <property type="project" value="UniProtKB"/>
</dbReference>
<dbReference type="DisProt" id="DP01407"/>
<dbReference type="InterPro" id="IPR021543">
    <property type="entry name" value="EGL-1"/>
</dbReference>
<dbReference type="Pfam" id="PF11430">
    <property type="entry name" value="EGL-1"/>
    <property type="match status" value="1"/>
</dbReference>
<comment type="function">
    <text evidence="1 2 3 5 7 8 9">Plays a major role in programmed cell death (PCD or apoptosis) by negatively regulating ced-9 (PubMed:10688797, PubMed:15383288, PubMed:9604928). Binds to and directly inhibits the activity of ced-9, releasing the cell death activator ced-4 from a ced-9/ced-4 containing protein complex and allowing ced-4 to activate the cell-killing caspase ced-3 (PubMed:10688797, PubMed:15383288, PubMed:9604928). Required to activate programmed cell death in the sister cells of the serotonergic neurosecretory motor (NSM) neurons during embryogenesis (PubMed:12874127). Required to activate programmed cell death in the sister cells of the M4 motor neuron and I1 pharyngeal neuron during embryogenesis (PubMed:20713707). During larval development, required for the elimination of transient presynaptic components upstream of ced-9, ced-4 and ced-3 apoptotic pathway (PubMed:26074078). Together with ain-1, a component of the miRNA-induced-silencing complex (miRISC), and probably upstream of ced-3 and ced-4, regulates temporal cell fate patterning during larval development (PubMed:25432023). Has been shown in two studies to be dispensable in mitochondrial dynamics and morphology during early embryonic development (PubMed:19327994, PubMed:21949250). However, one study shows that during larval development, egl-1 is involved in modulating mitochondrial dynamics, perhaps acting by stabilizing the interaction between ced-9 and drp-1 in order to promote mitochondrial fission (PubMed:21949250). Involved in inducing mitochondrial fragmentation during apoptosis, probably acting via ced-9 and dynamin-related protein drp-1 (PubMed:15716954).</text>
</comment>
<comment type="subunit">
    <text evidence="3 6 9">Interacts with ced-9; the interaction results in ced-4 release from the ced-4/ced-9 complex (PubMed:15383288, PubMed:9604928). Interaction with ced-9 may enhance interaction of ced-9 with drp-1, but not with ced-4 (PubMed:21949250). A ced-9/egl-1 complex may recruit drp-1 to the mitochondrial surface (PubMed:21949250).</text>
</comment>
<comment type="interaction">
    <interactant intactId="EBI-495949">
        <id>O61667</id>
    </interactant>
    <interactant intactId="EBI-494110">
        <id>P41958</id>
        <label>ced-9</label>
    </interactant>
    <organismsDiffer>false</organismsDiffer>
    <experiments>7</experiments>
</comment>
<comment type="subcellular location">
    <subcellularLocation>
        <location evidence="8">Synapse</location>
    </subcellularLocation>
    <text evidence="8">Localizes to RMED/V synaptic regions in L1 larvae.</text>
</comment>
<comment type="disruption phenotype">
    <text evidence="7 9">Mutants block programmed cell death (PubMed:9604928). In an ain-1 mutant background, enhances the proportion of animals arrested at the larval stage, with egg-laying defects and with a ruptured vulva (PubMed:25432023).</text>
</comment>
<comment type="caution">
    <text evidence="4 6">Two studies agree that egl-1 is dispensable in mitochondrial dynamics and morphology during early embryonic development (PubMed:19327994, PubMed:21949250). However, it is also reported that egl-1 can act in mitochondrial dynamics during larval development, via regulation of ced-9 (PubMed:21949250).</text>
</comment>
<comment type="sequence caution" evidence="11">
    <conflict type="erroneous initiation">
        <sequence resource="EMBL-CDS" id="AAC39023"/>
    </conflict>
    <text>Truncated N-terminus.</text>
</comment>
<accession>O61667</accession>
<accession>Q7JLC9</accession>
<organism>
    <name type="scientific">Caenorhabditis elegans</name>
    <dbReference type="NCBI Taxonomy" id="6239"/>
    <lineage>
        <taxon>Eukaryota</taxon>
        <taxon>Metazoa</taxon>
        <taxon>Ecdysozoa</taxon>
        <taxon>Nematoda</taxon>
        <taxon>Chromadorea</taxon>
        <taxon>Rhabditida</taxon>
        <taxon>Rhabditina</taxon>
        <taxon>Rhabditomorpha</taxon>
        <taxon>Rhabditoidea</taxon>
        <taxon>Rhabditidae</taxon>
        <taxon>Peloderinae</taxon>
        <taxon>Caenorhabditis</taxon>
    </lineage>
</organism>
<gene>
    <name evidence="12 14" type="primary">egl-1</name>
    <name type="ORF">F23B12.9</name>
</gene>
<evidence type="ECO:0000269" key="1">
    <source>
    </source>
</evidence>
<evidence type="ECO:0000269" key="2">
    <source>
    </source>
</evidence>
<evidence type="ECO:0000269" key="3">
    <source>
    </source>
</evidence>
<evidence type="ECO:0000269" key="4">
    <source>
    </source>
</evidence>
<evidence type="ECO:0000269" key="5">
    <source>
    </source>
</evidence>
<evidence type="ECO:0000269" key="6">
    <source>
    </source>
</evidence>
<evidence type="ECO:0000269" key="7">
    <source>
    </source>
</evidence>
<evidence type="ECO:0000269" key="8">
    <source>
    </source>
</evidence>
<evidence type="ECO:0000269" key="9">
    <source>
    </source>
</evidence>
<evidence type="ECO:0000303" key="10">
    <source>
    </source>
</evidence>
<evidence type="ECO:0000305" key="11"/>
<evidence type="ECO:0000312" key="12">
    <source>
        <dbReference type="EMBL" id="AAC39023.1"/>
    </source>
</evidence>
<evidence type="ECO:0000312" key="13">
    <source>
        <dbReference type="EMBL" id="CAB82213.2"/>
    </source>
</evidence>
<evidence type="ECO:0000312" key="14">
    <source>
        <dbReference type="WormBase" id="F23B12.9"/>
    </source>
</evidence>
<evidence type="ECO:0007829" key="15">
    <source>
        <dbReference type="PDB" id="1TY4"/>
    </source>
</evidence>